<accession>Q0TBG2</accession>
<gene>
    <name evidence="1" type="primary">ligB</name>
    <name type="ordered locus">ECP_3745</name>
</gene>
<reference key="1">
    <citation type="journal article" date="2006" name="Mol. Microbiol.">
        <title>Role of pathogenicity island-associated integrases in the genome plasticity of uropathogenic Escherichia coli strain 536.</title>
        <authorList>
            <person name="Hochhut B."/>
            <person name="Wilde C."/>
            <person name="Balling G."/>
            <person name="Middendorf B."/>
            <person name="Dobrindt U."/>
            <person name="Brzuszkiewicz E."/>
            <person name="Gottschalk G."/>
            <person name="Carniel E."/>
            <person name="Hacker J."/>
        </authorList>
    </citation>
    <scope>NUCLEOTIDE SEQUENCE [LARGE SCALE GENOMIC DNA]</scope>
    <source>
        <strain>536 / UPEC</strain>
    </source>
</reference>
<proteinExistence type="inferred from homology"/>
<dbReference type="EC" id="6.5.1.2" evidence="1"/>
<dbReference type="EMBL" id="CP000247">
    <property type="protein sequence ID" value="ABG71717.1"/>
    <property type="status" value="ALT_INIT"/>
    <property type="molecule type" value="Genomic_DNA"/>
</dbReference>
<dbReference type="RefSeq" id="WP_001541786.1">
    <property type="nucleotide sequence ID" value="NC_008253.1"/>
</dbReference>
<dbReference type="SMR" id="Q0TBG2"/>
<dbReference type="KEGG" id="ecp:ECP_3745"/>
<dbReference type="HOGENOM" id="CLU_489786_0_0_6"/>
<dbReference type="Proteomes" id="UP000009182">
    <property type="component" value="Chromosome"/>
</dbReference>
<dbReference type="GO" id="GO:0003911">
    <property type="term" value="F:DNA ligase (NAD+) activity"/>
    <property type="evidence" value="ECO:0007669"/>
    <property type="project" value="UniProtKB-UniRule"/>
</dbReference>
<dbReference type="GO" id="GO:0006281">
    <property type="term" value="P:DNA repair"/>
    <property type="evidence" value="ECO:0007669"/>
    <property type="project" value="UniProtKB-KW"/>
</dbReference>
<dbReference type="GO" id="GO:0006260">
    <property type="term" value="P:DNA replication"/>
    <property type="evidence" value="ECO:0007669"/>
    <property type="project" value="UniProtKB-KW"/>
</dbReference>
<dbReference type="FunFam" id="1.10.287.610:FF:000003">
    <property type="entry name" value="DNA ligase B"/>
    <property type="match status" value="1"/>
</dbReference>
<dbReference type="FunFam" id="2.40.50.140:FF:000139">
    <property type="entry name" value="DNA ligase B"/>
    <property type="match status" value="1"/>
</dbReference>
<dbReference type="FunFam" id="3.30.470.30:FF:000007">
    <property type="entry name" value="DNA ligase B"/>
    <property type="match status" value="1"/>
</dbReference>
<dbReference type="Gene3D" id="3.30.470.30">
    <property type="entry name" value="DNA ligase/mRNA capping enzyme"/>
    <property type="match status" value="1"/>
</dbReference>
<dbReference type="Gene3D" id="1.10.287.610">
    <property type="entry name" value="Helix hairpin bin"/>
    <property type="match status" value="1"/>
</dbReference>
<dbReference type="Gene3D" id="2.40.50.140">
    <property type="entry name" value="Nucleic acid-binding proteins"/>
    <property type="match status" value="1"/>
</dbReference>
<dbReference type="HAMAP" id="MF_01587">
    <property type="entry name" value="DNA_ligase_B"/>
    <property type="match status" value="1"/>
</dbReference>
<dbReference type="InterPro" id="IPR018239">
    <property type="entry name" value="DNA_ligase_AS"/>
</dbReference>
<dbReference type="InterPro" id="IPR020923">
    <property type="entry name" value="DNA_ligase_B"/>
</dbReference>
<dbReference type="InterPro" id="IPR033136">
    <property type="entry name" value="DNA_ligase_CS"/>
</dbReference>
<dbReference type="InterPro" id="IPR013839">
    <property type="entry name" value="DNAligase_adenylation"/>
</dbReference>
<dbReference type="InterPro" id="IPR013840">
    <property type="entry name" value="DNAligase_N"/>
</dbReference>
<dbReference type="InterPro" id="IPR012340">
    <property type="entry name" value="NA-bd_OB-fold"/>
</dbReference>
<dbReference type="InterPro" id="IPR050326">
    <property type="entry name" value="NAD_dep_DNA_ligaseB"/>
</dbReference>
<dbReference type="InterPro" id="IPR004150">
    <property type="entry name" value="NAD_DNA_ligase_OB"/>
</dbReference>
<dbReference type="InterPro" id="IPR010994">
    <property type="entry name" value="RuvA_2-like"/>
</dbReference>
<dbReference type="NCBIfam" id="NF005987">
    <property type="entry name" value="PRK08097.1"/>
    <property type="match status" value="1"/>
</dbReference>
<dbReference type="PANTHER" id="PTHR47810">
    <property type="entry name" value="DNA LIGASE"/>
    <property type="match status" value="1"/>
</dbReference>
<dbReference type="PANTHER" id="PTHR47810:SF1">
    <property type="entry name" value="DNA LIGASE B"/>
    <property type="match status" value="1"/>
</dbReference>
<dbReference type="Pfam" id="PF01653">
    <property type="entry name" value="DNA_ligase_aden"/>
    <property type="match status" value="1"/>
</dbReference>
<dbReference type="Pfam" id="PF03120">
    <property type="entry name" value="DNA_ligase_OB"/>
    <property type="match status" value="1"/>
</dbReference>
<dbReference type="SMART" id="SM00532">
    <property type="entry name" value="LIGANc"/>
    <property type="match status" value="1"/>
</dbReference>
<dbReference type="SUPFAM" id="SSF56091">
    <property type="entry name" value="DNA ligase/mRNA capping enzyme, catalytic domain"/>
    <property type="match status" value="1"/>
</dbReference>
<dbReference type="SUPFAM" id="SSF50249">
    <property type="entry name" value="Nucleic acid-binding proteins"/>
    <property type="match status" value="1"/>
</dbReference>
<dbReference type="SUPFAM" id="SSF47781">
    <property type="entry name" value="RuvA domain 2-like"/>
    <property type="match status" value="1"/>
</dbReference>
<dbReference type="PROSITE" id="PS01055">
    <property type="entry name" value="DNA_LIGASE_N1"/>
    <property type="match status" value="1"/>
</dbReference>
<dbReference type="PROSITE" id="PS01056">
    <property type="entry name" value="DNA_LIGASE_N2"/>
    <property type="match status" value="1"/>
</dbReference>
<feature type="chain" id="PRO_0000313541" description="DNA ligase B">
    <location>
        <begin position="1"/>
        <end position="560"/>
    </location>
</feature>
<feature type="active site" description="N6-AMP-lysine intermediate" evidence="1">
    <location>
        <position position="124"/>
    </location>
</feature>
<sequence length="560" mass="63172">MKVWMAILISILCWQSSAWAVCPAWSPARAQEEISRLQQQIKQWDDDYWKEGESEIEDGVYDQLSARLTQWQRCFGNEPRDAMMPPLAGTVMHPVAHTGVRKLADKNALRLWMREHNDLWVQPKVDGVAVTLVYRDGKLNKAISRGNGLKGEDWTQKVSLISAVPQTVSGPLANSTLQGEIFLKRKGHIQQQMGGINARAKVAGLMMRQGNSDTLNSLAVFVWAWPDGPHLMTDRLKDLATAGFTLTQTYTRAVKNADEVAHVRNEWWKAKLPFVTDGVVVRAAKEPESRHWLPGQAEWLVAWKYQPVAQVAEVKAIQFAVGKSGKISVVASLAPVMLDDKKVQRVNIGSVRRWQEWDIAPGDQILVSLAGQGIPRIDDVVWRGAERTKPTPPENRFNSLTCYFASDVCQEQFISRLVWLGSKQVLGLDGIGEAGWRALHQTHRFEHIFSWLLLTPEQLQNTPGIAKSKSAQLWHQFNLARQQPFTRWVMAMGIPLTRAALNASDERSWSQLLFSTEQFWQQLPGTGSGRARQVIEWKENAQIKKLGSWLAAQQITGFEP</sequence>
<keyword id="KW-0227">DNA damage</keyword>
<keyword id="KW-0234">DNA repair</keyword>
<keyword id="KW-0235">DNA replication</keyword>
<keyword id="KW-0436">Ligase</keyword>
<keyword id="KW-0520">NAD</keyword>
<protein>
    <recommendedName>
        <fullName evidence="1">DNA ligase B</fullName>
        <ecNumber evidence="1">6.5.1.2</ecNumber>
    </recommendedName>
    <alternativeName>
        <fullName evidence="1">Polydeoxyribonucleotide synthase [NAD(+)] B</fullName>
    </alternativeName>
</protein>
<evidence type="ECO:0000255" key="1">
    <source>
        <dbReference type="HAMAP-Rule" id="MF_01587"/>
    </source>
</evidence>
<evidence type="ECO:0000305" key="2"/>
<comment type="function">
    <text evidence="1">Catalyzes the formation of phosphodiester linkages between 5'-phosphoryl and 3'-hydroxyl groups in double-stranded DNA using NAD as a coenzyme and as the energy source for the reaction.</text>
</comment>
<comment type="catalytic activity">
    <reaction evidence="1">
        <text>NAD(+) + (deoxyribonucleotide)n-3'-hydroxyl + 5'-phospho-(deoxyribonucleotide)m = (deoxyribonucleotide)n+m + AMP + beta-nicotinamide D-nucleotide.</text>
        <dbReference type="EC" id="6.5.1.2"/>
    </reaction>
</comment>
<comment type="similarity">
    <text evidence="1">Belongs to the NAD-dependent DNA ligase family. LigB subfamily.</text>
</comment>
<comment type="sequence caution" evidence="2">
    <conflict type="erroneous initiation">
        <sequence resource="EMBL-CDS" id="ABG71717"/>
    </conflict>
</comment>
<name>LIGB_ECOL5</name>
<organism>
    <name type="scientific">Escherichia coli O6:K15:H31 (strain 536 / UPEC)</name>
    <dbReference type="NCBI Taxonomy" id="362663"/>
    <lineage>
        <taxon>Bacteria</taxon>
        <taxon>Pseudomonadati</taxon>
        <taxon>Pseudomonadota</taxon>
        <taxon>Gammaproteobacteria</taxon>
        <taxon>Enterobacterales</taxon>
        <taxon>Enterobacteriaceae</taxon>
        <taxon>Escherichia</taxon>
    </lineage>
</organism>